<reference key="1">
    <citation type="journal article" date="2003" name="Lancet">
        <title>Genome sequence of Vibrio parahaemolyticus: a pathogenic mechanism distinct from that of V. cholerae.</title>
        <authorList>
            <person name="Makino K."/>
            <person name="Oshima K."/>
            <person name="Kurokawa K."/>
            <person name="Yokoyama K."/>
            <person name="Uda T."/>
            <person name="Tagomori K."/>
            <person name="Iijima Y."/>
            <person name="Najima M."/>
            <person name="Nakano M."/>
            <person name="Yamashita A."/>
            <person name="Kubota Y."/>
            <person name="Kimura S."/>
            <person name="Yasunaga T."/>
            <person name="Honda T."/>
            <person name="Shinagawa H."/>
            <person name="Hattori M."/>
            <person name="Iida T."/>
        </authorList>
    </citation>
    <scope>NUCLEOTIDE SEQUENCE [LARGE SCALE GENOMIC DNA]</scope>
    <source>
        <strain>RIMD 2210633</strain>
    </source>
</reference>
<evidence type="ECO:0000255" key="1">
    <source>
        <dbReference type="HAMAP-Rule" id="MF_01176"/>
    </source>
</evidence>
<proteinExistence type="inferred from homology"/>
<protein>
    <recommendedName>
        <fullName evidence="1">HTH-type transcriptional regulator IscR</fullName>
    </recommendedName>
</protein>
<organism>
    <name type="scientific">Vibrio parahaemolyticus serotype O3:K6 (strain RIMD 2210633)</name>
    <dbReference type="NCBI Taxonomy" id="223926"/>
    <lineage>
        <taxon>Bacteria</taxon>
        <taxon>Pseudomonadati</taxon>
        <taxon>Pseudomonadota</taxon>
        <taxon>Gammaproteobacteria</taxon>
        <taxon>Vibrionales</taxon>
        <taxon>Vibrionaceae</taxon>
        <taxon>Vibrio</taxon>
    </lineage>
</organism>
<keyword id="KW-0001">2Fe-2S</keyword>
<keyword id="KW-0010">Activator</keyword>
<keyword id="KW-0238">DNA-binding</keyword>
<keyword id="KW-0408">Iron</keyword>
<keyword id="KW-0411">Iron-sulfur</keyword>
<keyword id="KW-0479">Metal-binding</keyword>
<keyword id="KW-0678">Repressor</keyword>
<keyword id="KW-0804">Transcription</keyword>
<keyword id="KW-0805">Transcription regulation</keyword>
<sequence length="168" mass="17850">MKLTSKGRYAVTAMLDVALHSQQNPVPLADISERQGISLSYLEQLFSKLRKAGLVASVRGPGGGYRLGADAHSIAIGTVIAAVDESVDATKCQGKGDCQGGTRCLTHTLWRDLSSRISDFLNNITLGELMTDNEVLEISDRQDIGLAVTHGLSNKNTTAAPIGVNVRS</sequence>
<name>ISCR_VIBPA</name>
<dbReference type="EMBL" id="BA000031">
    <property type="protein sequence ID" value="BAC58858.1"/>
    <property type="molecule type" value="Genomic_DNA"/>
</dbReference>
<dbReference type="RefSeq" id="NP_796974.1">
    <property type="nucleotide sequence ID" value="NC_004603.1"/>
</dbReference>
<dbReference type="RefSeq" id="WP_005496331.1">
    <property type="nucleotide sequence ID" value="NC_004603.1"/>
</dbReference>
<dbReference type="SMR" id="Q87S29"/>
<dbReference type="GeneID" id="1188070"/>
<dbReference type="KEGG" id="vpa:VP0595"/>
<dbReference type="PATRIC" id="fig|223926.6.peg.564"/>
<dbReference type="eggNOG" id="COG1959">
    <property type="taxonomic scope" value="Bacteria"/>
</dbReference>
<dbReference type="HOGENOM" id="CLU_107144_0_0_6"/>
<dbReference type="Proteomes" id="UP000002493">
    <property type="component" value="Chromosome 1"/>
</dbReference>
<dbReference type="GO" id="GO:0005829">
    <property type="term" value="C:cytosol"/>
    <property type="evidence" value="ECO:0007669"/>
    <property type="project" value="TreeGrafter"/>
</dbReference>
<dbReference type="GO" id="GO:0051537">
    <property type="term" value="F:2 iron, 2 sulfur cluster binding"/>
    <property type="evidence" value="ECO:0007669"/>
    <property type="project" value="UniProtKB-KW"/>
</dbReference>
<dbReference type="GO" id="GO:0003700">
    <property type="term" value="F:DNA-binding transcription factor activity"/>
    <property type="evidence" value="ECO:0007669"/>
    <property type="project" value="UniProtKB-UniRule"/>
</dbReference>
<dbReference type="GO" id="GO:0003690">
    <property type="term" value="F:double-stranded DNA binding"/>
    <property type="evidence" value="ECO:0007669"/>
    <property type="project" value="UniProtKB-UniRule"/>
</dbReference>
<dbReference type="GO" id="GO:0005506">
    <property type="term" value="F:iron ion binding"/>
    <property type="evidence" value="ECO:0007669"/>
    <property type="project" value="UniProtKB-UniRule"/>
</dbReference>
<dbReference type="FunFam" id="1.10.10.10:FF:000026">
    <property type="entry name" value="HTH-type transcriptional regulator IscR"/>
    <property type="match status" value="1"/>
</dbReference>
<dbReference type="Gene3D" id="1.10.10.10">
    <property type="entry name" value="Winged helix-like DNA-binding domain superfamily/Winged helix DNA-binding domain"/>
    <property type="match status" value="1"/>
</dbReference>
<dbReference type="HAMAP" id="MF_01176">
    <property type="entry name" value="HTH_type_IscR"/>
    <property type="match status" value="1"/>
</dbReference>
<dbReference type="InterPro" id="IPR010242">
    <property type="entry name" value="TF_HTH_IscR"/>
</dbReference>
<dbReference type="InterPro" id="IPR030489">
    <property type="entry name" value="TR_Rrf2-type_CS"/>
</dbReference>
<dbReference type="InterPro" id="IPR000944">
    <property type="entry name" value="Tscrpt_reg_Rrf2"/>
</dbReference>
<dbReference type="InterPro" id="IPR036388">
    <property type="entry name" value="WH-like_DNA-bd_sf"/>
</dbReference>
<dbReference type="InterPro" id="IPR036390">
    <property type="entry name" value="WH_DNA-bd_sf"/>
</dbReference>
<dbReference type="NCBIfam" id="TIGR02010">
    <property type="entry name" value="IscR"/>
    <property type="match status" value="1"/>
</dbReference>
<dbReference type="NCBIfam" id="NF008110">
    <property type="entry name" value="PRK10857.1"/>
    <property type="match status" value="1"/>
</dbReference>
<dbReference type="NCBIfam" id="TIGR00738">
    <property type="entry name" value="rrf2_super"/>
    <property type="match status" value="1"/>
</dbReference>
<dbReference type="PANTHER" id="PTHR33221:SF5">
    <property type="entry name" value="HTH-TYPE TRANSCRIPTIONAL REGULATOR ISCR"/>
    <property type="match status" value="1"/>
</dbReference>
<dbReference type="PANTHER" id="PTHR33221">
    <property type="entry name" value="WINGED HELIX-TURN-HELIX TRANSCRIPTIONAL REGULATOR, RRF2 FAMILY"/>
    <property type="match status" value="1"/>
</dbReference>
<dbReference type="Pfam" id="PF02082">
    <property type="entry name" value="Rrf2"/>
    <property type="match status" value="1"/>
</dbReference>
<dbReference type="SUPFAM" id="SSF46785">
    <property type="entry name" value="Winged helix' DNA-binding domain"/>
    <property type="match status" value="1"/>
</dbReference>
<dbReference type="PROSITE" id="PS01332">
    <property type="entry name" value="HTH_RRF2_1"/>
    <property type="match status" value="1"/>
</dbReference>
<dbReference type="PROSITE" id="PS51197">
    <property type="entry name" value="HTH_RRF2_2"/>
    <property type="match status" value="1"/>
</dbReference>
<gene>
    <name evidence="1" type="primary">iscR</name>
    <name type="ordered locus">VP0595</name>
</gene>
<comment type="function">
    <text evidence="1">Regulates the transcription of several operons and genes involved in the biogenesis of Fe-S clusters and Fe-S-containing proteins.</text>
</comment>
<comment type="cofactor">
    <cofactor evidence="1">
        <name>[2Fe-2S] cluster</name>
        <dbReference type="ChEBI" id="CHEBI:190135"/>
    </cofactor>
    <text evidence="1">Binds 1 [2Fe-2S] cluster.</text>
</comment>
<feature type="chain" id="PRO_0000268931" description="HTH-type transcriptional regulator IscR">
    <location>
        <begin position="1"/>
        <end position="168"/>
    </location>
</feature>
<feature type="domain" description="HTH rrf2-type" evidence="1">
    <location>
        <begin position="2"/>
        <end position="131"/>
    </location>
</feature>
<feature type="DNA-binding region" description="H-T-H motif" evidence="1">
    <location>
        <begin position="28"/>
        <end position="51"/>
    </location>
</feature>
<feature type="binding site" evidence="1">
    <location>
        <position position="92"/>
    </location>
    <ligand>
        <name>[2Fe-2S] cluster</name>
        <dbReference type="ChEBI" id="CHEBI:190135"/>
    </ligand>
</feature>
<feature type="binding site" evidence="1">
    <location>
        <position position="98"/>
    </location>
    <ligand>
        <name>[2Fe-2S] cluster</name>
        <dbReference type="ChEBI" id="CHEBI:190135"/>
    </ligand>
</feature>
<feature type="binding site" evidence="1">
    <location>
        <position position="104"/>
    </location>
    <ligand>
        <name>[2Fe-2S] cluster</name>
        <dbReference type="ChEBI" id="CHEBI:190135"/>
    </ligand>
</feature>
<accession>Q87S29</accession>